<organism>
    <name type="scientific">Rhizobium johnstonii (strain DSM 114642 / LMG 32736 / 3841)</name>
    <name type="common">Rhizobium leguminosarum bv. viciae</name>
    <dbReference type="NCBI Taxonomy" id="216596"/>
    <lineage>
        <taxon>Bacteria</taxon>
        <taxon>Pseudomonadati</taxon>
        <taxon>Pseudomonadota</taxon>
        <taxon>Alphaproteobacteria</taxon>
        <taxon>Hyphomicrobiales</taxon>
        <taxon>Rhizobiaceae</taxon>
        <taxon>Rhizobium/Agrobacterium group</taxon>
        <taxon>Rhizobium</taxon>
        <taxon>Rhizobium johnstonii</taxon>
    </lineage>
</organism>
<evidence type="ECO:0000255" key="1">
    <source>
        <dbReference type="HAMAP-Rule" id="MF_00041"/>
    </source>
</evidence>
<comment type="catalytic activity">
    <reaction evidence="1">
        <text>tRNA(Cys) + L-cysteine + ATP = L-cysteinyl-tRNA(Cys) + AMP + diphosphate</text>
        <dbReference type="Rhea" id="RHEA:17773"/>
        <dbReference type="Rhea" id="RHEA-COMP:9661"/>
        <dbReference type="Rhea" id="RHEA-COMP:9679"/>
        <dbReference type="ChEBI" id="CHEBI:30616"/>
        <dbReference type="ChEBI" id="CHEBI:33019"/>
        <dbReference type="ChEBI" id="CHEBI:35235"/>
        <dbReference type="ChEBI" id="CHEBI:78442"/>
        <dbReference type="ChEBI" id="CHEBI:78517"/>
        <dbReference type="ChEBI" id="CHEBI:456215"/>
        <dbReference type="EC" id="6.1.1.16"/>
    </reaction>
</comment>
<comment type="cofactor">
    <cofactor evidence="1">
        <name>Zn(2+)</name>
        <dbReference type="ChEBI" id="CHEBI:29105"/>
    </cofactor>
    <text evidence="1">Binds 1 zinc ion per subunit.</text>
</comment>
<comment type="subunit">
    <text evidence="1">Monomer.</text>
</comment>
<comment type="subcellular location">
    <subcellularLocation>
        <location evidence="1">Cytoplasm</location>
    </subcellularLocation>
</comment>
<comment type="similarity">
    <text evidence="1">Belongs to the class-I aminoacyl-tRNA synthetase family.</text>
</comment>
<reference key="1">
    <citation type="journal article" date="2006" name="Genome Biol.">
        <title>The genome of Rhizobium leguminosarum has recognizable core and accessory components.</title>
        <authorList>
            <person name="Young J.P.W."/>
            <person name="Crossman L.C."/>
            <person name="Johnston A.W.B."/>
            <person name="Thomson N.R."/>
            <person name="Ghazoui Z.F."/>
            <person name="Hull K.H."/>
            <person name="Wexler M."/>
            <person name="Curson A.R.J."/>
            <person name="Todd J.D."/>
            <person name="Poole P.S."/>
            <person name="Mauchline T.H."/>
            <person name="East A.K."/>
            <person name="Quail M.A."/>
            <person name="Churcher C."/>
            <person name="Arrowsmith C."/>
            <person name="Cherevach I."/>
            <person name="Chillingworth T."/>
            <person name="Clarke K."/>
            <person name="Cronin A."/>
            <person name="Davis P."/>
            <person name="Fraser A."/>
            <person name="Hance Z."/>
            <person name="Hauser H."/>
            <person name="Jagels K."/>
            <person name="Moule S."/>
            <person name="Mungall K."/>
            <person name="Norbertczak H."/>
            <person name="Rabbinowitsch E."/>
            <person name="Sanders M."/>
            <person name="Simmonds M."/>
            <person name="Whitehead S."/>
            <person name="Parkhill J."/>
        </authorList>
    </citation>
    <scope>NUCLEOTIDE SEQUENCE [LARGE SCALE GENOMIC DNA]</scope>
    <source>
        <strain>DSM 114642 / LMG 32736 / 3841</strain>
    </source>
</reference>
<proteinExistence type="inferred from homology"/>
<dbReference type="EC" id="6.1.1.16" evidence="1"/>
<dbReference type="EMBL" id="AM236080">
    <property type="protein sequence ID" value="CAK07038.1"/>
    <property type="molecule type" value="Genomic_DNA"/>
</dbReference>
<dbReference type="RefSeq" id="WP_011651233.1">
    <property type="nucleotide sequence ID" value="NC_008380.1"/>
</dbReference>
<dbReference type="SMR" id="Q1MJ22"/>
<dbReference type="EnsemblBacteria" id="CAK07038">
    <property type="protein sequence ID" value="CAK07038"/>
    <property type="gene ID" value="RL1543"/>
</dbReference>
<dbReference type="KEGG" id="rle:RL1543"/>
<dbReference type="eggNOG" id="COG0215">
    <property type="taxonomic scope" value="Bacteria"/>
</dbReference>
<dbReference type="HOGENOM" id="CLU_013528_0_1_5"/>
<dbReference type="Proteomes" id="UP000006575">
    <property type="component" value="Chromosome"/>
</dbReference>
<dbReference type="GO" id="GO:0005829">
    <property type="term" value="C:cytosol"/>
    <property type="evidence" value="ECO:0007669"/>
    <property type="project" value="TreeGrafter"/>
</dbReference>
<dbReference type="GO" id="GO:0005524">
    <property type="term" value="F:ATP binding"/>
    <property type="evidence" value="ECO:0007669"/>
    <property type="project" value="UniProtKB-UniRule"/>
</dbReference>
<dbReference type="GO" id="GO:0004817">
    <property type="term" value="F:cysteine-tRNA ligase activity"/>
    <property type="evidence" value="ECO:0007669"/>
    <property type="project" value="UniProtKB-UniRule"/>
</dbReference>
<dbReference type="GO" id="GO:0008270">
    <property type="term" value="F:zinc ion binding"/>
    <property type="evidence" value="ECO:0007669"/>
    <property type="project" value="UniProtKB-UniRule"/>
</dbReference>
<dbReference type="GO" id="GO:0006423">
    <property type="term" value="P:cysteinyl-tRNA aminoacylation"/>
    <property type="evidence" value="ECO:0007669"/>
    <property type="project" value="UniProtKB-UniRule"/>
</dbReference>
<dbReference type="CDD" id="cd00672">
    <property type="entry name" value="CysRS_core"/>
    <property type="match status" value="1"/>
</dbReference>
<dbReference type="FunFam" id="3.40.50.620:FF:000068">
    <property type="entry name" value="Cysteine--tRNA ligase"/>
    <property type="match status" value="1"/>
</dbReference>
<dbReference type="Gene3D" id="3.40.50.620">
    <property type="entry name" value="HUPs"/>
    <property type="match status" value="1"/>
</dbReference>
<dbReference type="HAMAP" id="MF_00041">
    <property type="entry name" value="Cys_tRNA_synth"/>
    <property type="match status" value="1"/>
</dbReference>
<dbReference type="InterPro" id="IPR015803">
    <property type="entry name" value="Cys-tRNA-ligase"/>
</dbReference>
<dbReference type="InterPro" id="IPR024909">
    <property type="entry name" value="Cys-tRNA/MSH_ligase"/>
</dbReference>
<dbReference type="InterPro" id="IPR056411">
    <property type="entry name" value="CysS_C"/>
</dbReference>
<dbReference type="InterPro" id="IPR014729">
    <property type="entry name" value="Rossmann-like_a/b/a_fold"/>
</dbReference>
<dbReference type="InterPro" id="IPR032678">
    <property type="entry name" value="tRNA-synt_1_cat_dom"/>
</dbReference>
<dbReference type="InterPro" id="IPR009080">
    <property type="entry name" value="tRNAsynth_Ia_anticodon-bd"/>
</dbReference>
<dbReference type="NCBIfam" id="TIGR00435">
    <property type="entry name" value="cysS"/>
    <property type="match status" value="1"/>
</dbReference>
<dbReference type="PANTHER" id="PTHR10890:SF3">
    <property type="entry name" value="CYSTEINE--TRNA LIGASE, CYTOPLASMIC"/>
    <property type="match status" value="1"/>
</dbReference>
<dbReference type="PANTHER" id="PTHR10890">
    <property type="entry name" value="CYSTEINYL-TRNA SYNTHETASE"/>
    <property type="match status" value="1"/>
</dbReference>
<dbReference type="Pfam" id="PF23493">
    <property type="entry name" value="CysS_C"/>
    <property type="match status" value="1"/>
</dbReference>
<dbReference type="Pfam" id="PF01406">
    <property type="entry name" value="tRNA-synt_1e"/>
    <property type="match status" value="1"/>
</dbReference>
<dbReference type="PRINTS" id="PR00983">
    <property type="entry name" value="TRNASYNTHCYS"/>
</dbReference>
<dbReference type="SUPFAM" id="SSF47323">
    <property type="entry name" value="Anticodon-binding domain of a subclass of class I aminoacyl-tRNA synthetases"/>
    <property type="match status" value="1"/>
</dbReference>
<dbReference type="SUPFAM" id="SSF52374">
    <property type="entry name" value="Nucleotidylyl transferase"/>
    <property type="match status" value="1"/>
</dbReference>
<keyword id="KW-0030">Aminoacyl-tRNA synthetase</keyword>
<keyword id="KW-0067">ATP-binding</keyword>
<keyword id="KW-0963">Cytoplasm</keyword>
<keyword id="KW-0436">Ligase</keyword>
<keyword id="KW-0479">Metal-binding</keyword>
<keyword id="KW-0547">Nucleotide-binding</keyword>
<keyword id="KW-0648">Protein biosynthesis</keyword>
<keyword id="KW-0862">Zinc</keyword>
<protein>
    <recommendedName>
        <fullName evidence="1">Cysteine--tRNA ligase</fullName>
        <ecNumber evidence="1">6.1.1.16</ecNumber>
    </recommendedName>
    <alternativeName>
        <fullName evidence="1">Cysteinyl-tRNA synthetase</fullName>
        <shortName evidence="1">CysRS</shortName>
    </alternativeName>
</protein>
<gene>
    <name evidence="1" type="primary">cysS</name>
    <name type="ordered locus">RL1543</name>
</gene>
<name>SYC_RHIJ3</name>
<sequence>MDATPELKLYNTLTREKSVFSPIDPNNVRMYVCGPTVYDFAHIGNARPVIVFDVLFRLLRYVYGEDHVTYARNITDVDDKINARALRDHPGLPLNDAIRAVTEKTETQFHADVAELGCLEPNFEPRATDNIVEMTEIIEKLIGNGHAYVASGEVLFDTKSMADYGQLSKRPLDEQQAGARIAVDAHKKNPGDFVLWKLSSHNEPGWESPWGRGRPGWHIECSAMSKRYLGDVFDIHGGGLDLIFPHHENEIAQSRCAHGTEVMANVWMHNGFLQVEGRKMSKSEGNFVTIHELLQTETFGGRKWPGQVLRLAMLMTHYREPIDFSIKRLEEAERLLAKWPAAEASDAAPDESVLNALSDDLNTVAAVQALHALAQAAHGDPTARAVFAATADLLGLLPKKMEIDEAVASAVDALVAMRLEMLKAKNFTEADKIRDELTAKGIQLKDGKDAVTGERVTTWEVKR</sequence>
<accession>Q1MJ22</accession>
<feature type="chain" id="PRO_0000332884" description="Cysteine--tRNA ligase">
    <location>
        <begin position="1"/>
        <end position="463"/>
    </location>
</feature>
<feature type="short sequence motif" description="'HIGH' region">
    <location>
        <begin position="35"/>
        <end position="45"/>
    </location>
</feature>
<feature type="short sequence motif" description="'KMSKS' region">
    <location>
        <begin position="279"/>
        <end position="283"/>
    </location>
</feature>
<feature type="binding site" evidence="1">
    <location>
        <position position="33"/>
    </location>
    <ligand>
        <name>Zn(2+)</name>
        <dbReference type="ChEBI" id="CHEBI:29105"/>
    </ligand>
</feature>
<feature type="binding site" evidence="1">
    <location>
        <position position="221"/>
    </location>
    <ligand>
        <name>Zn(2+)</name>
        <dbReference type="ChEBI" id="CHEBI:29105"/>
    </ligand>
</feature>
<feature type="binding site" evidence="1">
    <location>
        <position position="246"/>
    </location>
    <ligand>
        <name>Zn(2+)</name>
        <dbReference type="ChEBI" id="CHEBI:29105"/>
    </ligand>
</feature>
<feature type="binding site" evidence="1">
    <location>
        <position position="250"/>
    </location>
    <ligand>
        <name>Zn(2+)</name>
        <dbReference type="ChEBI" id="CHEBI:29105"/>
    </ligand>
</feature>
<feature type="binding site" evidence="1">
    <location>
        <position position="282"/>
    </location>
    <ligand>
        <name>ATP</name>
        <dbReference type="ChEBI" id="CHEBI:30616"/>
    </ligand>
</feature>